<proteinExistence type="inferred from homology"/>
<organism>
    <name type="scientific">Salmonella enteritidis PT4 (strain P125109)</name>
    <dbReference type="NCBI Taxonomy" id="550537"/>
    <lineage>
        <taxon>Bacteria</taxon>
        <taxon>Pseudomonadati</taxon>
        <taxon>Pseudomonadota</taxon>
        <taxon>Gammaproteobacteria</taxon>
        <taxon>Enterobacterales</taxon>
        <taxon>Enterobacteriaceae</taxon>
        <taxon>Salmonella</taxon>
    </lineage>
</organism>
<dbReference type="EMBL" id="AM933172">
    <property type="protein sequence ID" value="CAR32435.1"/>
    <property type="molecule type" value="Genomic_DNA"/>
</dbReference>
<dbReference type="RefSeq" id="WP_000520789.1">
    <property type="nucleotide sequence ID" value="NC_011294.1"/>
</dbReference>
<dbReference type="SMR" id="B5QYM8"/>
<dbReference type="KEGG" id="set:SEN0852"/>
<dbReference type="HOGENOM" id="CLU_134358_2_1_6"/>
<dbReference type="Proteomes" id="UP000000613">
    <property type="component" value="Chromosome"/>
</dbReference>
<dbReference type="GO" id="GO:0030163">
    <property type="term" value="P:protein catabolic process"/>
    <property type="evidence" value="ECO:0007669"/>
    <property type="project" value="InterPro"/>
</dbReference>
<dbReference type="GO" id="GO:0006508">
    <property type="term" value="P:proteolysis"/>
    <property type="evidence" value="ECO:0007669"/>
    <property type="project" value="UniProtKB-UniRule"/>
</dbReference>
<dbReference type="FunFam" id="3.30.1390.10:FF:000002">
    <property type="entry name" value="ATP-dependent Clp protease adapter protein ClpS"/>
    <property type="match status" value="1"/>
</dbReference>
<dbReference type="Gene3D" id="3.30.1390.10">
    <property type="match status" value="1"/>
</dbReference>
<dbReference type="HAMAP" id="MF_00302">
    <property type="entry name" value="ClpS"/>
    <property type="match status" value="1"/>
</dbReference>
<dbReference type="InterPro" id="IPR022935">
    <property type="entry name" value="ClpS"/>
</dbReference>
<dbReference type="InterPro" id="IPR003769">
    <property type="entry name" value="ClpS_core"/>
</dbReference>
<dbReference type="InterPro" id="IPR014719">
    <property type="entry name" value="Ribosomal_bL12_C/ClpS-like"/>
</dbReference>
<dbReference type="NCBIfam" id="NF000670">
    <property type="entry name" value="PRK00033.1-3"/>
    <property type="match status" value="1"/>
</dbReference>
<dbReference type="NCBIfam" id="NF000672">
    <property type="entry name" value="PRK00033.1-5"/>
    <property type="match status" value="1"/>
</dbReference>
<dbReference type="PANTHER" id="PTHR33473:SF19">
    <property type="entry name" value="ATP-DEPENDENT CLP PROTEASE ADAPTER PROTEIN CLPS"/>
    <property type="match status" value="1"/>
</dbReference>
<dbReference type="PANTHER" id="PTHR33473">
    <property type="entry name" value="ATP-DEPENDENT CLP PROTEASE ADAPTER PROTEIN CLPS1, CHLOROPLASTIC"/>
    <property type="match status" value="1"/>
</dbReference>
<dbReference type="Pfam" id="PF02617">
    <property type="entry name" value="ClpS"/>
    <property type="match status" value="1"/>
</dbReference>
<dbReference type="SUPFAM" id="SSF54736">
    <property type="entry name" value="ClpS-like"/>
    <property type="match status" value="1"/>
</dbReference>
<gene>
    <name evidence="1" type="primary">clpS</name>
    <name type="ordered locus">SEN0852</name>
</gene>
<reference key="1">
    <citation type="journal article" date="2008" name="Genome Res.">
        <title>Comparative genome analysis of Salmonella enteritidis PT4 and Salmonella gallinarum 287/91 provides insights into evolutionary and host adaptation pathways.</title>
        <authorList>
            <person name="Thomson N.R."/>
            <person name="Clayton D.J."/>
            <person name="Windhorst D."/>
            <person name="Vernikos G."/>
            <person name="Davidson S."/>
            <person name="Churcher C."/>
            <person name="Quail M.A."/>
            <person name="Stevens M."/>
            <person name="Jones M.A."/>
            <person name="Watson M."/>
            <person name="Barron A."/>
            <person name="Layton A."/>
            <person name="Pickard D."/>
            <person name="Kingsley R.A."/>
            <person name="Bignell A."/>
            <person name="Clark L."/>
            <person name="Harris B."/>
            <person name="Ormond D."/>
            <person name="Abdellah Z."/>
            <person name="Brooks K."/>
            <person name="Cherevach I."/>
            <person name="Chillingworth T."/>
            <person name="Woodward J."/>
            <person name="Norberczak H."/>
            <person name="Lord A."/>
            <person name="Arrowsmith C."/>
            <person name="Jagels K."/>
            <person name="Moule S."/>
            <person name="Mungall K."/>
            <person name="Saunders M."/>
            <person name="Whitehead S."/>
            <person name="Chabalgoity J.A."/>
            <person name="Maskell D."/>
            <person name="Humphreys T."/>
            <person name="Roberts M."/>
            <person name="Barrow P.A."/>
            <person name="Dougan G."/>
            <person name="Parkhill J."/>
        </authorList>
    </citation>
    <scope>NUCLEOTIDE SEQUENCE [LARGE SCALE GENOMIC DNA]</scope>
    <source>
        <strain>P125109</strain>
    </source>
</reference>
<name>CLPS_SALEP</name>
<protein>
    <recommendedName>
        <fullName evidence="1">ATP-dependent Clp protease adapter protein ClpS</fullName>
    </recommendedName>
</protein>
<accession>B5QYM8</accession>
<feature type="chain" id="PRO_1000115471" description="ATP-dependent Clp protease adapter protein ClpS">
    <location>
        <begin position="1"/>
        <end position="106"/>
    </location>
</feature>
<sequence>MGKTNDWLDFDQLVEDSVRDALKPPSMYKVILVNDDYTPMEFVIDVLQKFFSYDVERATQLMLAVHYQGKAICGVFTAEVAETKVAMVNKYARENEHPLLCTLEKA</sequence>
<evidence type="ECO:0000255" key="1">
    <source>
        <dbReference type="HAMAP-Rule" id="MF_00302"/>
    </source>
</evidence>
<comment type="function">
    <text evidence="1">Involved in the modulation of the specificity of the ClpAP-mediated ATP-dependent protein degradation.</text>
</comment>
<comment type="subunit">
    <text evidence="1">Binds to the N-terminal domain of the chaperone ClpA.</text>
</comment>
<comment type="similarity">
    <text evidence="1">Belongs to the ClpS family.</text>
</comment>